<keyword id="KW-0968">Cytoplasmic vesicle</keyword>
<keyword id="KW-0217">Developmental protein</keyword>
<keyword id="KW-1015">Disulfide bond</keyword>
<keyword id="KW-0430">Lectin</keyword>
<keyword id="KW-0553">Oncogene</keyword>
<keyword id="KW-1185">Reference proteome</keyword>
<keyword id="KW-0964">Secreted</keyword>
<keyword id="KW-0732">Signal</keyword>
<sequence>MRVAGAAKLVVAVAVFLLTFYVISQVFEIKMDASLGNLFARSALDAVVRSTKPPRYKCGISKACPEKHFAFKMASGAANVVGPKICLEDNVLMSGVKNNVGRGINVALVNGKTGELIDTRFFDMWGGNVAPFIEFLKAIQDGTIVLMGTYDDGATKLNDEARRLIAELGSTSITHLGFRDNWVFCGGKGIKTKSPFEQHIKNNKDTNKYEGWPEVVEMEGCIPQKQD</sequence>
<organism>
    <name type="scientific">Bos taurus</name>
    <name type="common">Bovine</name>
    <dbReference type="NCBI Taxonomy" id="9913"/>
    <lineage>
        <taxon>Eukaryota</taxon>
        <taxon>Metazoa</taxon>
        <taxon>Chordata</taxon>
        <taxon>Craniata</taxon>
        <taxon>Vertebrata</taxon>
        <taxon>Euteleostomi</taxon>
        <taxon>Mammalia</taxon>
        <taxon>Eutheria</taxon>
        <taxon>Laurasiatheria</taxon>
        <taxon>Artiodactyla</taxon>
        <taxon>Ruminantia</taxon>
        <taxon>Pecora</taxon>
        <taxon>Bovidae</taxon>
        <taxon>Bovinae</taxon>
        <taxon>Bos</taxon>
    </lineage>
</organism>
<comment type="function">
    <text evidence="1">May be involved in retinal laminar formation. Promotes epithelial to mesenchymal transition (By similarity).</text>
</comment>
<comment type="subcellular location">
    <subcellularLocation>
        <location evidence="1">Secreted</location>
    </subcellularLocation>
    <subcellularLocation>
        <location evidence="1">Cytoplasmic vesicle</location>
    </subcellularLocation>
</comment>
<comment type="similarity">
    <text evidence="4">Belongs to the FAM3 family.</text>
</comment>
<proteinExistence type="evidence at transcript level"/>
<dbReference type="EMBL" id="BC142498">
    <property type="protein sequence ID" value="AAI42499.1"/>
    <property type="molecule type" value="mRNA"/>
</dbReference>
<dbReference type="RefSeq" id="NP_001092617.1">
    <property type="nucleotide sequence ID" value="NM_001099147.1"/>
</dbReference>
<dbReference type="RefSeq" id="XP_024846675.1">
    <property type="nucleotide sequence ID" value="XM_024990907.2"/>
</dbReference>
<dbReference type="SMR" id="A5PKI3"/>
<dbReference type="FunCoup" id="A5PKI3">
    <property type="interactions" value="911"/>
</dbReference>
<dbReference type="STRING" id="9913.ENSBTAP00000058101"/>
<dbReference type="PaxDb" id="9913-ENSBTAP00000030039"/>
<dbReference type="Ensembl" id="ENSBTAT00000092137.1">
    <property type="protein sequence ID" value="ENSBTAP00000093407.1"/>
    <property type="gene ID" value="ENSBTAG00000007976.7"/>
</dbReference>
<dbReference type="GeneID" id="615690"/>
<dbReference type="KEGG" id="bta:615690"/>
<dbReference type="CTD" id="10447"/>
<dbReference type="VEuPathDB" id="HostDB:ENSBTAG00000007976"/>
<dbReference type="VGNC" id="VGNC:28811">
    <property type="gene designation" value="FAM3C"/>
</dbReference>
<dbReference type="eggNOG" id="ENOG502QQR8">
    <property type="taxonomic scope" value="Eukaryota"/>
</dbReference>
<dbReference type="GeneTree" id="ENSGT00950000183004"/>
<dbReference type="HOGENOM" id="CLU_099478_0_0_1"/>
<dbReference type="InParanoid" id="A5PKI3"/>
<dbReference type="OMA" id="KACPANH"/>
<dbReference type="OrthoDB" id="440755at2759"/>
<dbReference type="TreeFam" id="TF353414"/>
<dbReference type="Reactome" id="R-BTA-114608">
    <property type="pathway name" value="Platelet degranulation"/>
</dbReference>
<dbReference type="Proteomes" id="UP000009136">
    <property type="component" value="Chromosome 4"/>
</dbReference>
<dbReference type="Bgee" id="ENSBTAG00000007976">
    <property type="expression patterns" value="Expressed in rumen papilla and 106 other cell types or tissues"/>
</dbReference>
<dbReference type="GO" id="GO:0031410">
    <property type="term" value="C:cytoplasmic vesicle"/>
    <property type="evidence" value="ECO:0007669"/>
    <property type="project" value="UniProtKB-KW"/>
</dbReference>
<dbReference type="GO" id="GO:0005615">
    <property type="term" value="C:extracellular space"/>
    <property type="evidence" value="ECO:0000318"/>
    <property type="project" value="GO_Central"/>
</dbReference>
<dbReference type="GO" id="GO:0005794">
    <property type="term" value="C:Golgi apparatus"/>
    <property type="evidence" value="ECO:0007669"/>
    <property type="project" value="Ensembl"/>
</dbReference>
<dbReference type="GO" id="GO:0030246">
    <property type="term" value="F:carbohydrate binding"/>
    <property type="evidence" value="ECO:0007669"/>
    <property type="project" value="UniProtKB-KW"/>
</dbReference>
<dbReference type="GO" id="GO:0005125">
    <property type="term" value="F:cytokine activity"/>
    <property type="evidence" value="ECO:0007669"/>
    <property type="project" value="Ensembl"/>
</dbReference>
<dbReference type="GO" id="GO:0009913">
    <property type="term" value="P:epidermal cell differentiation"/>
    <property type="evidence" value="ECO:0007669"/>
    <property type="project" value="Ensembl"/>
</dbReference>
<dbReference type="GO" id="GO:0070371">
    <property type="term" value="P:ERK1 and ERK2 cascade"/>
    <property type="evidence" value="ECO:0007669"/>
    <property type="project" value="Ensembl"/>
</dbReference>
<dbReference type="GO" id="GO:0010467">
    <property type="term" value="P:gene expression"/>
    <property type="evidence" value="ECO:0007669"/>
    <property type="project" value="Ensembl"/>
</dbReference>
<dbReference type="GO" id="GO:0006954">
    <property type="term" value="P:inflammatory response"/>
    <property type="evidence" value="ECO:0007669"/>
    <property type="project" value="Ensembl"/>
</dbReference>
<dbReference type="GO" id="GO:0043616">
    <property type="term" value="P:keratinocyte proliferation"/>
    <property type="evidence" value="ECO:0007669"/>
    <property type="project" value="Ensembl"/>
</dbReference>
<dbReference type="GO" id="GO:0030223">
    <property type="term" value="P:neutrophil differentiation"/>
    <property type="evidence" value="ECO:0007669"/>
    <property type="project" value="Ensembl"/>
</dbReference>
<dbReference type="GO" id="GO:0043491">
    <property type="term" value="P:phosphatidylinositol 3-kinase/protein kinase B signal transduction"/>
    <property type="evidence" value="ECO:0007669"/>
    <property type="project" value="Ensembl"/>
</dbReference>
<dbReference type="CDD" id="cd13940">
    <property type="entry name" value="ILEI_FAM3C"/>
    <property type="match status" value="1"/>
</dbReference>
<dbReference type="InterPro" id="IPR039220">
    <property type="entry name" value="FAM3"/>
</dbReference>
<dbReference type="InterPro" id="IPR039477">
    <property type="entry name" value="ILEI/PANDER_dom"/>
</dbReference>
<dbReference type="InterPro" id="IPR039475">
    <property type="entry name" value="ILEI_FAM3C"/>
</dbReference>
<dbReference type="PANTHER" id="PTHR14592">
    <property type="entry name" value="UNCHARACTERIZED FAM3"/>
    <property type="match status" value="1"/>
</dbReference>
<dbReference type="Pfam" id="PF15711">
    <property type="entry name" value="ILEI"/>
    <property type="match status" value="1"/>
</dbReference>
<dbReference type="PROSITE" id="PS52031">
    <property type="entry name" value="GG_LECTIN"/>
    <property type="match status" value="1"/>
</dbReference>
<name>FAM3C_BOVIN</name>
<protein>
    <recommendedName>
        <fullName>Protein FAM3C</fullName>
    </recommendedName>
    <alternativeName>
        <fullName>Interleukin-like EMT inducer</fullName>
    </alternativeName>
</protein>
<reference key="1">
    <citation type="submission" date="2007-06" db="EMBL/GenBank/DDBJ databases">
        <authorList>
            <consortium name="NIH - Mammalian Gene Collection (MGC) project"/>
        </authorList>
    </citation>
    <scope>NUCLEOTIDE SEQUENCE [LARGE SCALE MRNA]</scope>
    <source>
        <strain>Hereford</strain>
        <tissue>Basal ganglia</tissue>
    </source>
</reference>
<accession>A5PKI3</accession>
<feature type="signal peptide" evidence="2">
    <location>
        <begin position="1"/>
        <end position="24"/>
    </location>
</feature>
<feature type="chain" id="PRO_0000395981" description="Protein FAM3C">
    <location>
        <begin position="25"/>
        <end position="227"/>
    </location>
</feature>
<feature type="domain" description="GG-type lectin" evidence="3">
    <location>
        <begin position="67"/>
        <end position="225"/>
    </location>
</feature>
<feature type="disulfide bond" evidence="1">
    <location>
        <begin position="58"/>
        <end position="86"/>
    </location>
</feature>
<feature type="disulfide bond" evidence="1">
    <location>
        <begin position="64"/>
        <end position="221"/>
    </location>
</feature>
<gene>
    <name type="primary">FAM3C</name>
    <name type="synonym">ILEI</name>
</gene>
<evidence type="ECO:0000250" key="1"/>
<evidence type="ECO:0000255" key="2"/>
<evidence type="ECO:0000255" key="3">
    <source>
        <dbReference type="PROSITE-ProRule" id="PRU01375"/>
    </source>
</evidence>
<evidence type="ECO:0000305" key="4"/>